<proteinExistence type="inferred from homology"/>
<evidence type="ECO:0000255" key="1">
    <source>
        <dbReference type="HAMAP-Rule" id="MF_00402"/>
    </source>
</evidence>
<evidence type="ECO:0000305" key="2"/>
<protein>
    <recommendedName>
        <fullName evidence="1">Large ribosomal subunit protein bL19</fullName>
    </recommendedName>
    <alternativeName>
        <fullName evidence="2">50S ribosomal protein L19</fullName>
    </alternativeName>
</protein>
<keyword id="KW-0687">Ribonucleoprotein</keyword>
<keyword id="KW-0689">Ribosomal protein</keyword>
<reference key="1">
    <citation type="submission" date="2008-10" db="EMBL/GenBank/DDBJ databases">
        <title>Genome sequence of Bacillus cereus AH820.</title>
        <authorList>
            <person name="Dodson R.J."/>
            <person name="Durkin A.S."/>
            <person name="Rosovitz M.J."/>
            <person name="Rasko D.A."/>
            <person name="Hoffmaster A."/>
            <person name="Ravel J."/>
            <person name="Sutton G."/>
        </authorList>
    </citation>
    <scope>NUCLEOTIDE SEQUENCE [LARGE SCALE GENOMIC DNA]</scope>
    <source>
        <strain>AH820</strain>
    </source>
</reference>
<dbReference type="EMBL" id="CP001283">
    <property type="protein sequence ID" value="ACK87196.1"/>
    <property type="molecule type" value="Genomic_DNA"/>
</dbReference>
<dbReference type="RefSeq" id="WP_001186516.1">
    <property type="nucleotide sequence ID" value="NC_011773.1"/>
</dbReference>
<dbReference type="SMR" id="B7JJS6"/>
<dbReference type="GeneID" id="93007272"/>
<dbReference type="KEGG" id="bcu:BCAH820_3853"/>
<dbReference type="HOGENOM" id="CLU_103507_2_1_9"/>
<dbReference type="Proteomes" id="UP000001363">
    <property type="component" value="Chromosome"/>
</dbReference>
<dbReference type="GO" id="GO:0022625">
    <property type="term" value="C:cytosolic large ribosomal subunit"/>
    <property type="evidence" value="ECO:0007669"/>
    <property type="project" value="TreeGrafter"/>
</dbReference>
<dbReference type="GO" id="GO:0003735">
    <property type="term" value="F:structural constituent of ribosome"/>
    <property type="evidence" value="ECO:0007669"/>
    <property type="project" value="InterPro"/>
</dbReference>
<dbReference type="GO" id="GO:0006412">
    <property type="term" value="P:translation"/>
    <property type="evidence" value="ECO:0007669"/>
    <property type="project" value="UniProtKB-UniRule"/>
</dbReference>
<dbReference type="FunFam" id="2.30.30.790:FF:000001">
    <property type="entry name" value="50S ribosomal protein L19"/>
    <property type="match status" value="1"/>
</dbReference>
<dbReference type="Gene3D" id="2.30.30.790">
    <property type="match status" value="1"/>
</dbReference>
<dbReference type="HAMAP" id="MF_00402">
    <property type="entry name" value="Ribosomal_bL19"/>
    <property type="match status" value="1"/>
</dbReference>
<dbReference type="InterPro" id="IPR001857">
    <property type="entry name" value="Ribosomal_bL19"/>
</dbReference>
<dbReference type="InterPro" id="IPR018257">
    <property type="entry name" value="Ribosomal_bL19_CS"/>
</dbReference>
<dbReference type="InterPro" id="IPR038657">
    <property type="entry name" value="Ribosomal_bL19_sf"/>
</dbReference>
<dbReference type="InterPro" id="IPR008991">
    <property type="entry name" value="Translation_prot_SH3-like_sf"/>
</dbReference>
<dbReference type="NCBIfam" id="TIGR01024">
    <property type="entry name" value="rplS_bact"/>
    <property type="match status" value="1"/>
</dbReference>
<dbReference type="PANTHER" id="PTHR15680:SF9">
    <property type="entry name" value="LARGE RIBOSOMAL SUBUNIT PROTEIN BL19M"/>
    <property type="match status" value="1"/>
</dbReference>
<dbReference type="PANTHER" id="PTHR15680">
    <property type="entry name" value="RIBOSOMAL PROTEIN L19"/>
    <property type="match status" value="1"/>
</dbReference>
<dbReference type="Pfam" id="PF01245">
    <property type="entry name" value="Ribosomal_L19"/>
    <property type="match status" value="1"/>
</dbReference>
<dbReference type="PIRSF" id="PIRSF002191">
    <property type="entry name" value="Ribosomal_L19"/>
    <property type="match status" value="1"/>
</dbReference>
<dbReference type="PRINTS" id="PR00061">
    <property type="entry name" value="RIBOSOMALL19"/>
</dbReference>
<dbReference type="SUPFAM" id="SSF50104">
    <property type="entry name" value="Translation proteins SH3-like domain"/>
    <property type="match status" value="1"/>
</dbReference>
<dbReference type="PROSITE" id="PS01015">
    <property type="entry name" value="RIBOSOMAL_L19"/>
    <property type="match status" value="1"/>
</dbReference>
<name>RL19_BACC0</name>
<sequence>MQQLIAEITKGQLKTDLPSFRPGDTLRVHVKVVEGTRERIQLFEGVVIKRRGGGISETFTVRKISYGVGVERTFPVHTPRIAKIEVLRRGKVRRAKLYYLRNLRGKKARIKEIR</sequence>
<comment type="function">
    <text evidence="1">This protein is located at the 30S-50S ribosomal subunit interface and may play a role in the structure and function of the aminoacyl-tRNA binding site.</text>
</comment>
<comment type="similarity">
    <text evidence="1">Belongs to the bacterial ribosomal protein bL19 family.</text>
</comment>
<gene>
    <name evidence="1" type="primary">rplS</name>
    <name type="ordered locus">BCAH820_3853</name>
</gene>
<organism>
    <name type="scientific">Bacillus cereus (strain AH820)</name>
    <dbReference type="NCBI Taxonomy" id="405535"/>
    <lineage>
        <taxon>Bacteria</taxon>
        <taxon>Bacillati</taxon>
        <taxon>Bacillota</taxon>
        <taxon>Bacilli</taxon>
        <taxon>Bacillales</taxon>
        <taxon>Bacillaceae</taxon>
        <taxon>Bacillus</taxon>
        <taxon>Bacillus cereus group</taxon>
    </lineage>
</organism>
<feature type="chain" id="PRO_1000193790" description="Large ribosomal subunit protein bL19">
    <location>
        <begin position="1"/>
        <end position="114"/>
    </location>
</feature>
<accession>B7JJS6</accession>